<proteinExistence type="evidence at protein level"/>
<sequence>MNCKLTALLFLGLIVIASCGWINEKKMQQKIDEKIGKNIIGGMAKAVIHKMAKNEFQCVANVDTLGNCKKHCAKTTGEKGYCHGTKCKCGIELSY</sequence>
<protein>
    <recommendedName>
        <fullName evidence="8">Scorpine-like peptide Smp76</fullName>
    </recommendedName>
</protein>
<accession>P0DY18</accession>
<evidence type="ECO:0000250" key="1">
    <source>
        <dbReference type="UniProtKB" id="P0C2F4"/>
    </source>
</evidence>
<evidence type="ECO:0000250" key="2">
    <source>
        <dbReference type="UniProtKB" id="P56972"/>
    </source>
</evidence>
<evidence type="ECO:0000255" key="3"/>
<evidence type="ECO:0000255" key="4">
    <source>
        <dbReference type="PROSITE-ProRule" id="PRU01209"/>
    </source>
</evidence>
<evidence type="ECO:0000269" key="5">
    <source>
    </source>
</evidence>
<evidence type="ECO:0000269" key="6">
    <source>
    </source>
</evidence>
<evidence type="ECO:0000269" key="7">
    <source>
    </source>
</evidence>
<evidence type="ECO:0000303" key="8">
    <source>
    </source>
</evidence>
<evidence type="ECO:0000305" key="9"/>
<evidence type="ECO:0000305" key="10">
    <source>
    </source>
</evidence>
<evidence type="ECO:0000305" key="11">
    <source>
    </source>
</evidence>
<evidence type="ECO:0000312" key="12">
    <source>
        <dbReference type="EMBL" id="JZ469113"/>
    </source>
</evidence>
<comment type="function">
    <text evidence="1 2 6 7">Antibacterial peptide (By similarity). Dose-dependently inhibits Dengue virus (DENV), Zika virus (ZIKV) and Hepatitis C virus (HCV) infections (PubMed:30569290, PubMed:32435168). Two mechanisms of action have been described by two different groups: one involving activity on extracellular particles, and the other regulating the immune system (PubMed:30569290, PubMed:32435168). On Dengue virus (DENV), Zika virus (ZIKV), suppress the established viral infection, similar to the effect of interferon (IFN)-beta (PubMed:30569290). Mechanistically, upregulates the expression of IFN-beta by activating interferon regulatory transcription factor 3 (IRF3) phosphorylation (PubMed:30569290). On HCV and DENV, acts by inactivating extra-cellular infectious particles without affecting viral replication (PubMed:32435168). Shows very weak inhibition on measles virus (PubMed:32435168). Is neither toxic nor hemolytic in vitro at high concentrations (PubMed:32435168).</text>
</comment>
<comment type="subcellular location">
    <subcellularLocation>
        <location evidence="5 7">Secreted</location>
    </subcellularLocation>
</comment>
<comment type="tissue specificity">
    <text evidence="10 11">Expressed by the venom gland.</text>
</comment>
<comment type="PTM">
    <text evidence="7">Disulfide bonds are critical for antiviral function, and their disruption inhibit viral activity.</text>
</comment>
<comment type="mass spectrometry"/>
<comment type="similarity">
    <text evidence="9">Belongs to the long chain scorpion toxin family. Class 3 subfamily.</text>
</comment>
<feature type="signal peptide" evidence="3">
    <location>
        <begin position="1"/>
        <end position="19"/>
    </location>
</feature>
<feature type="chain" id="PRO_0000461913" description="Scorpine-like peptide Smp76" evidence="10">
    <location>
        <begin position="20"/>
        <end position="95"/>
    </location>
</feature>
<feature type="domain" description="BetaSPN-type CS-alpha/beta" evidence="4">
    <location>
        <begin position="55"/>
        <end position="95"/>
    </location>
</feature>
<feature type="disulfide bond" evidence="4">
    <location>
        <begin position="58"/>
        <end position="82"/>
    </location>
</feature>
<feature type="disulfide bond" evidence="4">
    <location>
        <begin position="68"/>
        <end position="87"/>
    </location>
</feature>
<feature type="disulfide bond" evidence="4">
    <location>
        <begin position="72"/>
        <end position="89"/>
    </location>
</feature>
<feature type="mutagenesis site" description="Loss of antiviral activity against both HCV and DENV." evidence="7">
    <location>
        <begin position="20"/>
        <end position="51"/>
    </location>
</feature>
<feature type="mutagenesis site" description="Loss of antiviral activity against both HCV and DENV." evidence="7">
    <location>
        <begin position="52"/>
        <end position="95"/>
    </location>
</feature>
<dbReference type="EMBL" id="JZ469113">
    <property type="status" value="NOT_ANNOTATED_CDS"/>
    <property type="molecule type" value="mRNA"/>
</dbReference>
<dbReference type="InterPro" id="IPR029237">
    <property type="entry name" value="Long_scorpion_toxin_alpha/beta"/>
</dbReference>
<dbReference type="Pfam" id="PF14866">
    <property type="entry name" value="Scorpion_toxin_alpha-beta"/>
    <property type="match status" value="1"/>
</dbReference>
<dbReference type="PROSITE" id="PS51862">
    <property type="entry name" value="BSPN_CSAB"/>
    <property type="match status" value="1"/>
</dbReference>
<reference evidence="12" key="1">
    <citation type="journal article" date="2013" name="Toxicon">
        <title>Venom proteomic and venomous glands transcriptomic analysis of the Egyptian scorpion Scorpio maurus palmatus (Arachnida: Scorpionidae).</title>
        <authorList>
            <person name="Abdel-Rahman M.A."/>
            <person name="Quintero-Hernandez V."/>
            <person name="Possani L.D."/>
        </authorList>
    </citation>
    <scope>NUCLEOTIDE SEQUENCE [MRNA]</scope>
    <scope>IDENTIFICATION BY MASS SPECTROMETRY</scope>
    <scope>SUBCELLULAR LOCATION</scope>
    <source>
        <tissue>Venom</tissue>
        <tissue>Venom gland</tissue>
    </source>
</reference>
<reference key="2">
    <citation type="journal article" date="2018" name="Virol. Sin.">
        <title>The scorpion venom peptide Smp76 inhibits viral infection by regulating type-I interferon response.</title>
        <authorList>
            <person name="Ji Z."/>
            <person name="Li F."/>
            <person name="Xia Z."/>
            <person name="Guo X."/>
            <person name="Gao M."/>
            <person name="Sun F."/>
            <person name="Cheng Y."/>
            <person name="Wu Y."/>
            <person name="Li W."/>
            <person name="Ali S.A."/>
            <person name="Cao Z."/>
        </authorList>
    </citation>
    <scope>FUNCTION</scope>
    <scope>RECOMBINANT EXPRESSION</scope>
</reference>
<reference key="3">
    <citation type="journal article" date="2020" name="Int. J. Pept. Res. Ther.">
        <title>Smp76, a scorpine-like peptide isolated from the venom of the scorpion Scorpio maurus palmatus, with a potent antiviral activity against hepatitis C virus and Dengue virus.</title>
        <authorList>
            <person name="El-Bitar A.M.H."/>
            <person name="Sarhan M."/>
            <person name="Abdel-Rahman M.A."/>
            <person name="Quintero-Hernandez V."/>
            <person name="Aoki-Utsubo C."/>
            <person name="Moustafa M.A."/>
            <person name="Possani L.D."/>
            <person name="Hotta H."/>
        </authorList>
    </citation>
    <scope>PROTEIN SEQUENCE OF 20-59</scope>
    <scope>FUNCTION</scope>
    <scope>RECOMBINANT EXPRESSION</scope>
    <scope>SUBCELLULAR LOCATION</scope>
    <scope>MASS SPECTROMETRY</scope>
    <scope>MUTAGENESIS OF 20-GLY--MET-51 AND 52-ALA--TYR-95</scope>
    <source>
        <tissue>Venom</tissue>
    </source>
</reference>
<keyword id="KW-0044">Antibiotic</keyword>
<keyword id="KW-0929">Antimicrobial</keyword>
<keyword id="KW-0903">Direct protein sequencing</keyword>
<keyword id="KW-1015">Disulfide bond</keyword>
<keyword id="KW-0964">Secreted</keyword>
<keyword id="KW-0732">Signal</keyword>
<keyword id="KW-0800">Toxin</keyword>
<organism>
    <name type="scientific">Scorpio palmatus</name>
    <name type="common">Israeli golden scorpion</name>
    <name type="synonym">Scorpio maurus palmatus</name>
    <dbReference type="NCBI Taxonomy" id="1662106"/>
    <lineage>
        <taxon>Eukaryota</taxon>
        <taxon>Metazoa</taxon>
        <taxon>Ecdysozoa</taxon>
        <taxon>Arthropoda</taxon>
        <taxon>Chelicerata</taxon>
        <taxon>Arachnida</taxon>
        <taxon>Scorpiones</taxon>
        <taxon>Iurida</taxon>
        <taxon>Scorpionoidea</taxon>
        <taxon>Scorpionidae</taxon>
        <taxon>Scorpioninae</taxon>
        <taxon>Scorpio</taxon>
    </lineage>
</organism>
<name>SMP76_SCOPA</name>